<evidence type="ECO:0000305" key="1"/>
<keyword id="KW-1185">Reference proteome</keyword>
<sequence length="176" mass="19911">MAEEEVDYVFKVVLNGDSAVGKSQLRARFTRDEFSMDSKATIRCRFQYSNAPYYKGAVGAMLVYDMTIRESFEHIPQWLEELRVHADKNIVIILIGNKTDLENQRSVPVEDAKEFAEKEGLFFLETSALNSTNVENSFNTLLTEIFNKVNKKNLAKTTVSCSSQVSLLRPPCVAAQ</sequence>
<dbReference type="EMBL" id="AC006592">
    <property type="protein sequence ID" value="AAD22360.1"/>
    <property type="molecule type" value="Genomic_DNA"/>
</dbReference>
<dbReference type="EMBL" id="CP002685">
    <property type="status" value="NOT_ANNOTATED_CDS"/>
    <property type="molecule type" value="Genomic_DNA"/>
</dbReference>
<dbReference type="PIR" id="A84612">
    <property type="entry name" value="A84612"/>
</dbReference>
<dbReference type="SMR" id="Q9SJZ5"/>
<dbReference type="FunCoup" id="Q9SJZ5">
    <property type="interactions" value="4"/>
</dbReference>
<dbReference type="STRING" id="3702.Q9SJZ5"/>
<dbReference type="PeptideAtlas" id="Q9SJZ5"/>
<dbReference type="Araport" id="AT2G22390"/>
<dbReference type="TAIR" id="AT2G22390"/>
<dbReference type="InParanoid" id="Q9SJZ5"/>
<dbReference type="Proteomes" id="UP000006548">
    <property type="component" value="Chromosome 2"/>
</dbReference>
<dbReference type="ExpressionAtlas" id="Q9SJZ5">
    <property type="expression patterns" value="baseline and differential"/>
</dbReference>
<dbReference type="GO" id="GO:0005768">
    <property type="term" value="C:endosome"/>
    <property type="evidence" value="ECO:0000318"/>
    <property type="project" value="GO_Central"/>
</dbReference>
<dbReference type="GO" id="GO:0005794">
    <property type="term" value="C:Golgi apparatus"/>
    <property type="evidence" value="ECO:0000318"/>
    <property type="project" value="GO_Central"/>
</dbReference>
<dbReference type="GO" id="GO:0005525">
    <property type="term" value="F:GTP binding"/>
    <property type="evidence" value="ECO:0000318"/>
    <property type="project" value="GO_Central"/>
</dbReference>
<dbReference type="GO" id="GO:0003924">
    <property type="term" value="F:GTPase activity"/>
    <property type="evidence" value="ECO:0000318"/>
    <property type="project" value="GO_Central"/>
</dbReference>
<dbReference type="FunFam" id="3.40.50.300:FF:001447">
    <property type="entry name" value="Ras-related protein Rab-1B"/>
    <property type="match status" value="1"/>
</dbReference>
<dbReference type="Gene3D" id="3.40.50.300">
    <property type="entry name" value="P-loop containing nucleotide triphosphate hydrolases"/>
    <property type="match status" value="2"/>
</dbReference>
<dbReference type="InterPro" id="IPR027417">
    <property type="entry name" value="P-loop_NTPase"/>
</dbReference>
<dbReference type="InterPro" id="IPR050209">
    <property type="entry name" value="Rab_GTPases_membrane_traffic"/>
</dbReference>
<dbReference type="InterPro" id="IPR005225">
    <property type="entry name" value="Small_GTP-bd"/>
</dbReference>
<dbReference type="InterPro" id="IPR001806">
    <property type="entry name" value="Small_GTPase"/>
</dbReference>
<dbReference type="NCBIfam" id="TIGR00231">
    <property type="entry name" value="small_GTP"/>
    <property type="match status" value="1"/>
</dbReference>
<dbReference type="PANTHER" id="PTHR47979">
    <property type="entry name" value="DRAB11-RELATED"/>
    <property type="match status" value="1"/>
</dbReference>
<dbReference type="Pfam" id="PF00071">
    <property type="entry name" value="Ras"/>
    <property type="match status" value="1"/>
</dbReference>
<dbReference type="PRINTS" id="PR00449">
    <property type="entry name" value="RASTRNSFRMNG"/>
</dbReference>
<dbReference type="SMART" id="SM00175">
    <property type="entry name" value="RAB"/>
    <property type="match status" value="1"/>
</dbReference>
<dbReference type="SMART" id="SM00173">
    <property type="entry name" value="RAS"/>
    <property type="match status" value="1"/>
</dbReference>
<dbReference type="SMART" id="SM00174">
    <property type="entry name" value="RHO"/>
    <property type="match status" value="1"/>
</dbReference>
<dbReference type="SUPFAM" id="SSF52540">
    <property type="entry name" value="P-loop containing nucleoside triphosphate hydrolases"/>
    <property type="match status" value="1"/>
</dbReference>
<dbReference type="PROSITE" id="PS51419">
    <property type="entry name" value="RAB"/>
    <property type="match status" value="1"/>
</dbReference>
<proteinExistence type="uncertain"/>
<organism>
    <name type="scientific">Arabidopsis thaliana</name>
    <name type="common">Mouse-ear cress</name>
    <dbReference type="NCBI Taxonomy" id="3702"/>
    <lineage>
        <taxon>Eukaryota</taxon>
        <taxon>Viridiplantae</taxon>
        <taxon>Streptophyta</taxon>
        <taxon>Embryophyta</taxon>
        <taxon>Tracheophyta</taxon>
        <taxon>Spermatophyta</taxon>
        <taxon>Magnoliopsida</taxon>
        <taxon>eudicotyledons</taxon>
        <taxon>Gunneridae</taxon>
        <taxon>Pentapetalae</taxon>
        <taxon>rosids</taxon>
        <taxon>malvids</taxon>
        <taxon>Brassicales</taxon>
        <taxon>Brassicaceae</taxon>
        <taxon>Camelineae</taxon>
        <taxon>Arabidopsis</taxon>
    </lineage>
</organism>
<protein>
    <recommendedName>
        <fullName>Putative Ras-related protein RABA4e</fullName>
        <shortName>AtRABA4e</shortName>
    </recommendedName>
</protein>
<name>RAA4E_ARATH</name>
<accession>Q9SJZ5</accession>
<gene>
    <name type="primary">RABA4E</name>
    <name type="ordered locus">At2g22390</name>
    <name type="ORF">F14M13.21</name>
</gene>
<feature type="chain" id="PRO_0000407348" description="Putative Ras-related protein RABA4e">
    <location>
        <begin position="1"/>
        <end position="176"/>
    </location>
</feature>
<comment type="similarity">
    <text evidence="1">Belongs to the small GTPase superfamily. Rab family.</text>
</comment>
<comment type="caution">
    <text evidence="1">Could be the product of a pseudogene.</text>
</comment>
<reference key="1">
    <citation type="journal article" date="1999" name="Nature">
        <title>Sequence and analysis of chromosome 2 of the plant Arabidopsis thaliana.</title>
        <authorList>
            <person name="Lin X."/>
            <person name="Kaul S."/>
            <person name="Rounsley S.D."/>
            <person name="Shea T.P."/>
            <person name="Benito M.-I."/>
            <person name="Town C.D."/>
            <person name="Fujii C.Y."/>
            <person name="Mason T.M."/>
            <person name="Bowman C.L."/>
            <person name="Barnstead M.E."/>
            <person name="Feldblyum T.V."/>
            <person name="Buell C.R."/>
            <person name="Ketchum K.A."/>
            <person name="Lee J.J."/>
            <person name="Ronning C.M."/>
            <person name="Koo H.L."/>
            <person name="Moffat K.S."/>
            <person name="Cronin L.A."/>
            <person name="Shen M."/>
            <person name="Pai G."/>
            <person name="Van Aken S."/>
            <person name="Umayam L."/>
            <person name="Tallon L.J."/>
            <person name="Gill J.E."/>
            <person name="Adams M.D."/>
            <person name="Carrera A.J."/>
            <person name="Creasy T.H."/>
            <person name="Goodman H.M."/>
            <person name="Somerville C.R."/>
            <person name="Copenhaver G.P."/>
            <person name="Preuss D."/>
            <person name="Nierman W.C."/>
            <person name="White O."/>
            <person name="Eisen J.A."/>
            <person name="Salzberg S.L."/>
            <person name="Fraser C.M."/>
            <person name="Venter J.C."/>
        </authorList>
    </citation>
    <scope>NUCLEOTIDE SEQUENCE [LARGE SCALE GENOMIC DNA]</scope>
    <source>
        <strain>cv. Columbia</strain>
    </source>
</reference>
<reference key="2">
    <citation type="journal article" date="2017" name="Plant J.">
        <title>Araport11: a complete reannotation of the Arabidopsis thaliana reference genome.</title>
        <authorList>
            <person name="Cheng C.Y."/>
            <person name="Krishnakumar V."/>
            <person name="Chan A.P."/>
            <person name="Thibaud-Nissen F."/>
            <person name="Schobel S."/>
            <person name="Town C.D."/>
        </authorList>
    </citation>
    <scope>GENOME REANNOTATION</scope>
    <source>
        <strain>cv. Columbia</strain>
    </source>
</reference>
<reference key="3">
    <citation type="journal article" date="2003" name="Plant Physiol.">
        <title>Analysis of the small GTPase gene superfamily of Arabidopsis.</title>
        <authorList>
            <person name="Vernoud V."/>
            <person name="Horton A.C."/>
            <person name="Yang Z."/>
            <person name="Nielsen E."/>
        </authorList>
    </citation>
    <scope>GENE FAMILY</scope>
    <scope>NOMENCLATURE</scope>
</reference>